<proteinExistence type="inferred from homology"/>
<sequence length="261" mass="28721">MSDILDRIIAVKREEVRAAEQSAPLEELRLEASSRDIRDFVGALRAKHTAGLAAVISEVKKASPSKGVLREHFVPAEIARSYEKHGAACLSVLTDVQFFQGSVAYLEEARAACNLPVLRKDFIVDPYQIVEARAMGADAILLIAAALETSQMQDLEALAHSLGLAVLVEVHDHDELMESLTLKTPLIGINNRNLRTFETSIETTIGMLEAIPDDRIVVTESGILSRADVERLRAMDVHTFLVGEAFMRANEPGVELARMFF</sequence>
<comment type="catalytic activity">
    <reaction evidence="1">
        <text>1-(2-carboxyphenylamino)-1-deoxy-D-ribulose 5-phosphate + H(+) = (1S,2R)-1-C-(indol-3-yl)glycerol 3-phosphate + CO2 + H2O</text>
        <dbReference type="Rhea" id="RHEA:23476"/>
        <dbReference type="ChEBI" id="CHEBI:15377"/>
        <dbReference type="ChEBI" id="CHEBI:15378"/>
        <dbReference type="ChEBI" id="CHEBI:16526"/>
        <dbReference type="ChEBI" id="CHEBI:58613"/>
        <dbReference type="ChEBI" id="CHEBI:58866"/>
        <dbReference type="EC" id="4.1.1.48"/>
    </reaction>
</comment>
<comment type="pathway">
    <text evidence="1">Amino-acid biosynthesis; L-tryptophan biosynthesis; L-tryptophan from chorismate: step 4/5.</text>
</comment>
<comment type="similarity">
    <text evidence="1">Belongs to the TrpC family.</text>
</comment>
<dbReference type="EC" id="4.1.1.48" evidence="1"/>
<dbReference type="EMBL" id="CP001052">
    <property type="protein sequence ID" value="ACD17889.1"/>
    <property type="molecule type" value="Genomic_DNA"/>
</dbReference>
<dbReference type="RefSeq" id="WP_012434450.1">
    <property type="nucleotide sequence ID" value="NC_010681.1"/>
</dbReference>
<dbReference type="SMR" id="B2SZ04"/>
<dbReference type="STRING" id="398527.Bphyt_3499"/>
<dbReference type="KEGG" id="bpy:Bphyt_3499"/>
<dbReference type="eggNOG" id="COG0134">
    <property type="taxonomic scope" value="Bacteria"/>
</dbReference>
<dbReference type="HOGENOM" id="CLU_034247_2_0_4"/>
<dbReference type="OrthoDB" id="9804217at2"/>
<dbReference type="UniPathway" id="UPA00035">
    <property type="reaction ID" value="UER00043"/>
</dbReference>
<dbReference type="Proteomes" id="UP000001739">
    <property type="component" value="Chromosome 1"/>
</dbReference>
<dbReference type="GO" id="GO:0004425">
    <property type="term" value="F:indole-3-glycerol-phosphate synthase activity"/>
    <property type="evidence" value="ECO:0007669"/>
    <property type="project" value="UniProtKB-UniRule"/>
</dbReference>
<dbReference type="GO" id="GO:0004640">
    <property type="term" value="F:phosphoribosylanthranilate isomerase activity"/>
    <property type="evidence" value="ECO:0007669"/>
    <property type="project" value="TreeGrafter"/>
</dbReference>
<dbReference type="GO" id="GO:0000162">
    <property type="term" value="P:L-tryptophan biosynthetic process"/>
    <property type="evidence" value="ECO:0007669"/>
    <property type="project" value="UniProtKB-UniRule"/>
</dbReference>
<dbReference type="CDD" id="cd00331">
    <property type="entry name" value="IGPS"/>
    <property type="match status" value="1"/>
</dbReference>
<dbReference type="FunFam" id="3.20.20.70:FF:000024">
    <property type="entry name" value="Indole-3-glycerol phosphate synthase"/>
    <property type="match status" value="1"/>
</dbReference>
<dbReference type="Gene3D" id="3.20.20.70">
    <property type="entry name" value="Aldolase class I"/>
    <property type="match status" value="1"/>
</dbReference>
<dbReference type="HAMAP" id="MF_00134_B">
    <property type="entry name" value="IGPS_B"/>
    <property type="match status" value="1"/>
</dbReference>
<dbReference type="InterPro" id="IPR013785">
    <property type="entry name" value="Aldolase_TIM"/>
</dbReference>
<dbReference type="InterPro" id="IPR045186">
    <property type="entry name" value="Indole-3-glycerol_P_synth"/>
</dbReference>
<dbReference type="InterPro" id="IPR013798">
    <property type="entry name" value="Indole-3-glycerol_P_synth_dom"/>
</dbReference>
<dbReference type="InterPro" id="IPR001468">
    <property type="entry name" value="Indole-3-GlycerolPSynthase_CS"/>
</dbReference>
<dbReference type="InterPro" id="IPR011060">
    <property type="entry name" value="RibuloseP-bd_barrel"/>
</dbReference>
<dbReference type="NCBIfam" id="NF001373">
    <property type="entry name" value="PRK00278.1-6"/>
    <property type="match status" value="1"/>
</dbReference>
<dbReference type="NCBIfam" id="NF001377">
    <property type="entry name" value="PRK00278.2-4"/>
    <property type="match status" value="1"/>
</dbReference>
<dbReference type="PANTHER" id="PTHR22854:SF2">
    <property type="entry name" value="INDOLE-3-GLYCEROL-PHOSPHATE SYNTHASE"/>
    <property type="match status" value="1"/>
</dbReference>
<dbReference type="PANTHER" id="PTHR22854">
    <property type="entry name" value="TRYPTOPHAN BIOSYNTHESIS PROTEIN"/>
    <property type="match status" value="1"/>
</dbReference>
<dbReference type="Pfam" id="PF00218">
    <property type="entry name" value="IGPS"/>
    <property type="match status" value="1"/>
</dbReference>
<dbReference type="SUPFAM" id="SSF51366">
    <property type="entry name" value="Ribulose-phoshate binding barrel"/>
    <property type="match status" value="1"/>
</dbReference>
<dbReference type="PROSITE" id="PS00614">
    <property type="entry name" value="IGPS"/>
    <property type="match status" value="1"/>
</dbReference>
<protein>
    <recommendedName>
        <fullName evidence="1">Indole-3-glycerol phosphate synthase</fullName>
        <shortName evidence="1">IGPS</shortName>
        <ecNumber evidence="1">4.1.1.48</ecNumber>
    </recommendedName>
</protein>
<evidence type="ECO:0000255" key="1">
    <source>
        <dbReference type="HAMAP-Rule" id="MF_00134"/>
    </source>
</evidence>
<accession>B2SZ04</accession>
<gene>
    <name evidence="1" type="primary">trpC</name>
    <name type="ordered locus">Bphyt_3499</name>
</gene>
<keyword id="KW-0028">Amino-acid biosynthesis</keyword>
<keyword id="KW-0057">Aromatic amino acid biosynthesis</keyword>
<keyword id="KW-0210">Decarboxylase</keyword>
<keyword id="KW-0456">Lyase</keyword>
<keyword id="KW-0822">Tryptophan biosynthesis</keyword>
<reference key="1">
    <citation type="journal article" date="2011" name="J. Bacteriol.">
        <title>Complete genome sequence of the plant growth-promoting endophyte Burkholderia phytofirmans strain PsJN.</title>
        <authorList>
            <person name="Weilharter A."/>
            <person name="Mitter B."/>
            <person name="Shin M.V."/>
            <person name="Chain P.S."/>
            <person name="Nowak J."/>
            <person name="Sessitsch A."/>
        </authorList>
    </citation>
    <scope>NUCLEOTIDE SEQUENCE [LARGE SCALE GENOMIC DNA]</scope>
    <source>
        <strain>DSM 17436 / LMG 22146 / PsJN</strain>
    </source>
</reference>
<feature type="chain" id="PRO_1000095857" description="Indole-3-glycerol phosphate synthase">
    <location>
        <begin position="1"/>
        <end position="261"/>
    </location>
</feature>
<name>TRPC_PARPJ</name>
<organism>
    <name type="scientific">Paraburkholderia phytofirmans (strain DSM 17436 / LMG 22146 / PsJN)</name>
    <name type="common">Burkholderia phytofirmans</name>
    <dbReference type="NCBI Taxonomy" id="398527"/>
    <lineage>
        <taxon>Bacteria</taxon>
        <taxon>Pseudomonadati</taxon>
        <taxon>Pseudomonadota</taxon>
        <taxon>Betaproteobacteria</taxon>
        <taxon>Burkholderiales</taxon>
        <taxon>Burkholderiaceae</taxon>
        <taxon>Paraburkholderia</taxon>
    </lineage>
</organism>